<sequence>MKGFKSLVVMTLTLFLVFSFMGNCNSAPQRLFERRNWTPQAMLYLKGAQGRRFLSDQSRRKDLSDRPPLERRSPNSQQLTLPEAAAVLLAFLQKPQEAGDENLDQTRFLEDSLLNW</sequence>
<evidence type="ECO:0000250" key="1"/>
<evidence type="ECO:0000255" key="2"/>
<evidence type="ECO:0000256" key="3">
    <source>
        <dbReference type="SAM" id="MobiDB-lite"/>
    </source>
</evidence>
<evidence type="ECO:0000305" key="4"/>
<dbReference type="EMBL" id="BC120360">
    <property type="protein sequence ID" value="AAI20361.1"/>
    <property type="molecule type" value="mRNA"/>
</dbReference>
<dbReference type="RefSeq" id="NP_001068875.1">
    <property type="nucleotide sequence ID" value="NM_001075407.1"/>
</dbReference>
<dbReference type="FunCoup" id="Q0VC44">
    <property type="interactions" value="26"/>
</dbReference>
<dbReference type="STRING" id="9913.ENSBTAP00000065237"/>
<dbReference type="PaxDb" id="9913-ENSBTAP00000000491"/>
<dbReference type="GeneID" id="509493"/>
<dbReference type="KEGG" id="bta:509493"/>
<dbReference type="CTD" id="80763"/>
<dbReference type="VEuPathDB" id="HostDB:ENSBTAG00000053951"/>
<dbReference type="eggNOG" id="ENOG502SAD1">
    <property type="taxonomic scope" value="Eukaryota"/>
</dbReference>
<dbReference type="HOGENOM" id="CLU_169090_0_0_1"/>
<dbReference type="InParanoid" id="Q0VC44"/>
<dbReference type="OMA" id="DEVYIQE"/>
<dbReference type="OrthoDB" id="9946068at2759"/>
<dbReference type="TreeFam" id="TF333402"/>
<dbReference type="Proteomes" id="UP000009136">
    <property type="component" value="Chromosome 5"/>
</dbReference>
<dbReference type="Bgee" id="ENSBTAG00000053951">
    <property type="expression patterns" value="Expressed in infraspinatus muscle and 102 other cell types or tissues"/>
</dbReference>
<dbReference type="GO" id="GO:0005737">
    <property type="term" value="C:cytoplasm"/>
    <property type="evidence" value="ECO:0000318"/>
    <property type="project" value="GO_Central"/>
</dbReference>
<dbReference type="GO" id="GO:0031045">
    <property type="term" value="C:dense core granule"/>
    <property type="evidence" value="ECO:0000250"/>
    <property type="project" value="UniProtKB"/>
</dbReference>
<dbReference type="GO" id="GO:0005615">
    <property type="term" value="C:extracellular space"/>
    <property type="evidence" value="ECO:0000250"/>
    <property type="project" value="UniProtKB"/>
</dbReference>
<dbReference type="GO" id="GO:0030133">
    <property type="term" value="C:transport vesicle"/>
    <property type="evidence" value="ECO:0007669"/>
    <property type="project" value="UniProtKB-SubCell"/>
</dbReference>
<dbReference type="GO" id="GO:0005184">
    <property type="term" value="F:neuropeptide hormone activity"/>
    <property type="evidence" value="ECO:0000250"/>
    <property type="project" value="UniProtKB"/>
</dbReference>
<dbReference type="GO" id="GO:0031765">
    <property type="term" value="F:type 2 galanin receptor binding"/>
    <property type="evidence" value="ECO:0000250"/>
    <property type="project" value="UniProtKB"/>
</dbReference>
<dbReference type="GO" id="GO:0031766">
    <property type="term" value="F:type 3 galanin receptor binding"/>
    <property type="evidence" value="ECO:0000250"/>
    <property type="project" value="UniProtKB"/>
</dbReference>
<dbReference type="GO" id="GO:0044539">
    <property type="term" value="P:long-chain fatty acid import into cell"/>
    <property type="evidence" value="ECO:0000250"/>
    <property type="project" value="UniProtKB"/>
</dbReference>
<dbReference type="GO" id="GO:0032099">
    <property type="term" value="P:negative regulation of appetite"/>
    <property type="evidence" value="ECO:0000250"/>
    <property type="project" value="UniProtKB"/>
</dbReference>
<dbReference type="GO" id="GO:0010459">
    <property type="term" value="P:negative regulation of heart rate"/>
    <property type="evidence" value="ECO:0000250"/>
    <property type="project" value="UniProtKB"/>
</dbReference>
<dbReference type="GO" id="GO:0035814">
    <property type="term" value="P:negative regulation of renal sodium excretion"/>
    <property type="evidence" value="ECO:0000250"/>
    <property type="project" value="UniProtKB"/>
</dbReference>
<dbReference type="GO" id="GO:1904306">
    <property type="term" value="P:positive regulation of gastro-intestinal system smooth muscle contraction"/>
    <property type="evidence" value="ECO:0000250"/>
    <property type="project" value="UniProtKB"/>
</dbReference>
<dbReference type="GO" id="GO:0003084">
    <property type="term" value="P:positive regulation of systemic arterial blood pressure"/>
    <property type="evidence" value="ECO:0000250"/>
    <property type="project" value="UniProtKB"/>
</dbReference>
<dbReference type="GO" id="GO:0045944">
    <property type="term" value="P:positive regulation of transcription by RNA polymerase II"/>
    <property type="evidence" value="ECO:0000250"/>
    <property type="project" value="UniProtKB"/>
</dbReference>
<dbReference type="GO" id="GO:0051930">
    <property type="term" value="P:regulation of sensory perception of pain"/>
    <property type="evidence" value="ECO:0000250"/>
    <property type="project" value="UniProtKB"/>
</dbReference>
<dbReference type="InterPro" id="IPR028126">
    <property type="entry name" value="Spexin"/>
</dbReference>
<dbReference type="PANTHER" id="PTHR28590">
    <property type="entry name" value="SPEXIN"/>
    <property type="match status" value="1"/>
</dbReference>
<dbReference type="PANTHER" id="PTHR28590:SF1">
    <property type="entry name" value="SPEXIN"/>
    <property type="match status" value="1"/>
</dbReference>
<dbReference type="Pfam" id="PF15171">
    <property type="entry name" value="Spexin"/>
    <property type="match status" value="1"/>
</dbReference>
<name>SPXN_BOVIN</name>
<proteinExistence type="inferred from homology"/>
<feature type="signal peptide" evidence="2">
    <location>
        <begin position="1"/>
        <end position="26"/>
    </location>
</feature>
<feature type="chain" id="PRO_0000430210" description="Spexin">
    <location>
        <begin position="27"/>
        <end position="116"/>
    </location>
</feature>
<feature type="propeptide" id="PRO_0000363213" evidence="1">
    <location>
        <begin position="27"/>
        <end position="35"/>
    </location>
</feature>
<feature type="peptide" id="PRO_0000363214" description="Spexin-1">
    <location>
        <begin position="36"/>
        <end position="49"/>
    </location>
</feature>
<feature type="propeptide" id="PRO_0000363215" evidence="1">
    <location>
        <begin position="50"/>
        <end position="116"/>
    </location>
</feature>
<feature type="peptide" id="PRO_0000430211" description="Spexin-2">
    <location>
        <begin position="53"/>
        <end position="70"/>
    </location>
</feature>
<feature type="propeptide" id="PRO_0000430212" evidence="1">
    <location>
        <begin position="74"/>
        <end position="116"/>
    </location>
</feature>
<feature type="region of interest" description="Disordered" evidence="3">
    <location>
        <begin position="53"/>
        <end position="80"/>
    </location>
</feature>
<feature type="compositionally biased region" description="Basic and acidic residues" evidence="3">
    <location>
        <begin position="53"/>
        <end position="73"/>
    </location>
</feature>
<feature type="site" description="Cleavage; by prohormone convertase 2" evidence="1">
    <location>
        <begin position="35"/>
        <end position="36"/>
    </location>
</feature>
<feature type="site" description="Cleavage; by prohormone convertase 2" evidence="1">
    <location>
        <begin position="52"/>
        <end position="53"/>
    </location>
</feature>
<feature type="site" description="Cleavage; by prohormone convertase 2" evidence="1">
    <location>
        <begin position="72"/>
        <end position="73"/>
    </location>
</feature>
<feature type="modified residue" description="Glutamine amide" evidence="1">
    <location>
        <position position="49"/>
    </location>
</feature>
<accession>Q0VC44</accession>
<gene>
    <name type="primary">SPX</name>
</gene>
<comment type="function">
    <text evidence="1">Plays a role as a central modulator of cardiovascular and renal function and nociception. Also plays a role in energy metabolism and storage. Inhibits adrenocortical cell proliferation with minor stimulation on corticosteroid release (By similarity).</text>
</comment>
<comment type="function">
    <molecule>Spexin-1</molecule>
    <text evidence="1">Acts as a ligand for galanin receptors GALR2 and GALR3. Intracerebroventricular administration of the peptide induces an increase in arterial blood pressure, a decrease in both heart rate and renal excretion and delayed natriuresis. Intraventricular administration of the peptide induces antinociceptive activity. Also induces contraction of muscarinic-like stomach smooth muscles. Intraperitoneal administration of the peptide induces a reduction in food consumption and body weight. Inhibits long chain fatty acid uptake into adipocytes (By similarity).</text>
</comment>
<comment type="function">
    <molecule>Spexin-2</molecule>
    <text evidence="1">Intracerebroventricular administration of the peptide induces a decrease in heart rate, but no change in arterial pressure, and an increase in urine flow rate. Intraventricular administration of the peptide induces antinociceptive activity (By similarity).</text>
</comment>
<comment type="subcellular location">
    <subcellularLocation>
        <location evidence="1">Secreted</location>
    </subcellularLocation>
    <subcellularLocation>
        <location evidence="1">Secreted</location>
        <location evidence="1">Extracellular space</location>
    </subcellularLocation>
    <subcellularLocation>
        <location evidence="1">Cytoplasmic vesicle</location>
        <location evidence="1">Secretory vesicle</location>
    </subcellularLocation>
    <text evidence="1">Secreted via the classical ER/Golgi-dependent pathway into the extracellular medium largely as a full-length protein without the signal peptide, and not as a hydrolyzed and amidated peptide. Localized extracellularly surrounding the villous trophoblastic cells. Detected in the serum (By similarity).</text>
</comment>
<comment type="similarity">
    <text evidence="4">Belongs to the spexin family.</text>
</comment>
<protein>
    <recommendedName>
        <fullName>Spexin</fullName>
    </recommendedName>
    <alternativeName>
        <fullName>NPQ</fullName>
    </alternativeName>
    <alternativeName>
        <fullName>Neuropeptide Q</fullName>
    </alternativeName>
    <alternativeName>
        <fullName>Spexin hormone</fullName>
    </alternativeName>
    <component>
        <recommendedName>
            <fullName>Spexin-1</fullName>
        </recommendedName>
    </component>
    <component>
        <recommendedName>
            <fullName>Spexin-2</fullName>
        </recommendedName>
        <alternativeName>
            <fullName>NPQ 53-70</fullName>
        </alternativeName>
    </component>
</protein>
<reference key="1">
    <citation type="submission" date="2006-08" db="EMBL/GenBank/DDBJ databases">
        <authorList>
            <consortium name="NIH - Mammalian Gene Collection (MGC) project"/>
        </authorList>
    </citation>
    <scope>NUCLEOTIDE SEQUENCE [LARGE SCALE MRNA]</scope>
    <source>
        <strain>Hereford</strain>
        <tissue>Fetal muscle</tissue>
    </source>
</reference>
<keyword id="KW-0027">Amidation</keyword>
<keyword id="KW-0165">Cleavage on pair of basic residues</keyword>
<keyword id="KW-0968">Cytoplasmic vesicle</keyword>
<keyword id="KW-0372">Hormone</keyword>
<keyword id="KW-1185">Reference proteome</keyword>
<keyword id="KW-0964">Secreted</keyword>
<keyword id="KW-0732">Signal</keyword>
<organism>
    <name type="scientific">Bos taurus</name>
    <name type="common">Bovine</name>
    <dbReference type="NCBI Taxonomy" id="9913"/>
    <lineage>
        <taxon>Eukaryota</taxon>
        <taxon>Metazoa</taxon>
        <taxon>Chordata</taxon>
        <taxon>Craniata</taxon>
        <taxon>Vertebrata</taxon>
        <taxon>Euteleostomi</taxon>
        <taxon>Mammalia</taxon>
        <taxon>Eutheria</taxon>
        <taxon>Laurasiatheria</taxon>
        <taxon>Artiodactyla</taxon>
        <taxon>Ruminantia</taxon>
        <taxon>Pecora</taxon>
        <taxon>Bovidae</taxon>
        <taxon>Bovinae</taxon>
        <taxon>Bos</taxon>
    </lineage>
</organism>